<proteinExistence type="inferred from homology"/>
<gene>
    <name type="primary">tlcE</name>
    <name type="synonym">tlc5</name>
    <name type="ordered locus">RP739</name>
</gene>
<feature type="chain" id="PRO_0000102584" description="ADP,ATP carrier protein 5">
    <location>
        <begin position="1"/>
        <end position="500"/>
    </location>
</feature>
<feature type="transmembrane region" description="Helical" evidence="2">
    <location>
        <begin position="26"/>
        <end position="46"/>
    </location>
</feature>
<feature type="transmembrane region" description="Helical" evidence="2">
    <location>
        <begin position="62"/>
        <end position="82"/>
    </location>
</feature>
<feature type="transmembrane region" description="Helical" evidence="2">
    <location>
        <begin position="94"/>
        <end position="114"/>
    </location>
</feature>
<feature type="transmembrane region" description="Helical" evidence="2">
    <location>
        <begin position="149"/>
        <end position="169"/>
    </location>
</feature>
<feature type="transmembrane region" description="Helical" evidence="2">
    <location>
        <begin position="184"/>
        <end position="204"/>
    </location>
</feature>
<feature type="transmembrane region" description="Helical" evidence="2">
    <location>
        <begin position="224"/>
        <end position="244"/>
    </location>
</feature>
<feature type="transmembrane region" description="Helical" evidence="2">
    <location>
        <begin position="287"/>
        <end position="307"/>
    </location>
</feature>
<feature type="transmembrane region" description="Helical" evidence="2">
    <location>
        <begin position="328"/>
        <end position="348"/>
    </location>
</feature>
<feature type="transmembrane region" description="Helical" evidence="2">
    <location>
        <begin position="357"/>
        <end position="377"/>
    </location>
</feature>
<feature type="transmembrane region" description="Helical" evidence="2">
    <location>
        <begin position="381"/>
        <end position="401"/>
    </location>
</feature>
<feature type="transmembrane region" description="Helical" evidence="2">
    <location>
        <begin position="469"/>
        <end position="489"/>
    </location>
</feature>
<keyword id="KW-0067">ATP-binding</keyword>
<keyword id="KW-1003">Cell membrane</keyword>
<keyword id="KW-0472">Membrane</keyword>
<keyword id="KW-0547">Nucleotide-binding</keyword>
<keyword id="KW-1185">Reference proteome</keyword>
<keyword id="KW-0812">Transmembrane</keyword>
<keyword id="KW-1133">Transmembrane helix</keyword>
<keyword id="KW-0813">Transport</keyword>
<sequence length="500" mass="57074">MLSTSPSRSFKNKFRAAFWPVHNYELGKFIPISALMFCILFNQNILRILKDSILISEISAEIAGFAKVYCVTPVAALFVIIYAKMINHLTFEKIFYYLSAFFISCFILFAFVIYPNIHIFHVHPDTLSDWMNKYPHFKWYISLVGNWGYIVYYSLAELWPNIFYVLLFWQFTNELTTTEEAKRFYTLFSLFGNSSLILVGFLMMNLSSEDTIIKKFISISDSKITLVQVSTTIIAIVAIICCLLVRFISKYIFTNPLFYHKTKSSRSTAQRMGLIKSFKYIVKSKYLWLLLICSAAFGFAINLVEAVWKAKIKELYPTVNTYAEFNSLYILWTGVAIIVMTIIGNNVMRMHNWFVAAVISPVIIMVTGVLFFGLIVFDQQILSLFDGAILMSPLALAVSIGGIQNILAKGTKYSIWDTSREMLYIPLDDELKTKGKAAVDVISAKVGKSSSGLVQSIIFTLVPNATFTSISPILMVVFTFVCFAWIYAVRKIYFEYQKIA</sequence>
<dbReference type="EMBL" id="AJ235273">
    <property type="protein sequence ID" value="CAA15167.1"/>
    <property type="molecule type" value="Genomic_DNA"/>
</dbReference>
<dbReference type="EMBL" id="Y11778">
    <property type="protein sequence ID" value="CAA72457.1"/>
    <property type="molecule type" value="Genomic_DNA"/>
</dbReference>
<dbReference type="PIR" id="G71633">
    <property type="entry name" value="G71633"/>
</dbReference>
<dbReference type="RefSeq" id="NP_221091.1">
    <property type="nucleotide sequence ID" value="NC_000963.1"/>
</dbReference>
<dbReference type="RefSeq" id="WP_004597024.1">
    <property type="nucleotide sequence ID" value="NC_000963.1"/>
</dbReference>
<dbReference type="STRING" id="272947.gene:17555809"/>
<dbReference type="TCDB" id="2.A.12.1.5">
    <property type="family name" value="the atp:adp antiporter (aaa) family"/>
</dbReference>
<dbReference type="EnsemblBacteria" id="CAA15167">
    <property type="protein sequence ID" value="CAA15167"/>
    <property type="gene ID" value="CAA15167"/>
</dbReference>
<dbReference type="GeneID" id="57569860"/>
<dbReference type="KEGG" id="rpr:RP739"/>
<dbReference type="PATRIC" id="fig|272947.5.peg.772"/>
<dbReference type="eggNOG" id="COG3202">
    <property type="taxonomic scope" value="Bacteria"/>
</dbReference>
<dbReference type="HOGENOM" id="CLU_023964_0_1_5"/>
<dbReference type="OrthoDB" id="19786at2"/>
<dbReference type="Proteomes" id="UP000002480">
    <property type="component" value="Chromosome"/>
</dbReference>
<dbReference type="GO" id="GO:0005886">
    <property type="term" value="C:plasma membrane"/>
    <property type="evidence" value="ECO:0007669"/>
    <property type="project" value="UniProtKB-SubCell"/>
</dbReference>
<dbReference type="GO" id="GO:0005524">
    <property type="term" value="F:ATP binding"/>
    <property type="evidence" value="ECO:0007669"/>
    <property type="project" value="UniProtKB-KW"/>
</dbReference>
<dbReference type="GO" id="GO:0005471">
    <property type="term" value="F:ATP:ADP antiporter activity"/>
    <property type="evidence" value="ECO:0007669"/>
    <property type="project" value="InterPro"/>
</dbReference>
<dbReference type="GO" id="GO:0015931">
    <property type="term" value="P:nucleobase-containing compound transport"/>
    <property type="evidence" value="ECO:0000314"/>
    <property type="project" value="CACAO"/>
</dbReference>
<dbReference type="InterPro" id="IPR004667">
    <property type="entry name" value="ADP_ATP_car_bac_type"/>
</dbReference>
<dbReference type="NCBIfam" id="TIGR00769">
    <property type="entry name" value="AAA"/>
    <property type="match status" value="1"/>
</dbReference>
<dbReference type="PANTHER" id="PTHR31187">
    <property type="match status" value="1"/>
</dbReference>
<dbReference type="PANTHER" id="PTHR31187:SF1">
    <property type="entry name" value="ADP,ATP CARRIER PROTEIN 1"/>
    <property type="match status" value="1"/>
</dbReference>
<dbReference type="Pfam" id="PF03219">
    <property type="entry name" value="TLC"/>
    <property type="match status" value="1"/>
</dbReference>
<reference key="1">
    <citation type="journal article" date="1998" name="Nature">
        <title>The genome sequence of Rickettsia prowazekii and the origin of mitochondria.</title>
        <authorList>
            <person name="Andersson S.G.E."/>
            <person name="Zomorodipour A."/>
            <person name="Andersson J.O."/>
            <person name="Sicheritz-Ponten T."/>
            <person name="Alsmark U.C.M."/>
            <person name="Podowski R.M."/>
            <person name="Naeslund A.K."/>
            <person name="Eriksson A.-S."/>
            <person name="Winkler H.H."/>
            <person name="Kurland C.G."/>
        </authorList>
    </citation>
    <scope>NUCLEOTIDE SEQUENCE [LARGE SCALE GENOMIC DNA]</scope>
    <source>
        <strain>Madrid E</strain>
    </source>
</reference>
<reference key="2">
    <citation type="journal article" date="1997" name="Microbiology">
        <title>Genomic rearrangements during evolution of the obligate intracellular parasite Rickettsia prowazekii as inferred from an analysis of 52015 bp nucleotide sequence.</title>
        <authorList>
            <person name="Andersson J.O."/>
            <person name="Andersson S.G.E."/>
        </authorList>
    </citation>
    <scope>NUCLEOTIDE SEQUENCE [GENOMIC DNA] OF 325-500</scope>
    <source>
        <strain>Madrid E</strain>
    </source>
</reference>
<protein>
    <recommendedName>
        <fullName>ADP,ATP carrier protein 5</fullName>
    </recommendedName>
    <alternativeName>
        <fullName>ADP/ATP translocase 5</fullName>
    </alternativeName>
</protein>
<comment type="function">
    <text evidence="1">Provides the rickettsial cell with host ATP in exchange for rickettsial ADP. This is an obligate exchange system. This energy acquiring activity is an important component of rickettsial parasitism (By similarity).</text>
</comment>
<comment type="subcellular location">
    <subcellularLocation>
        <location>Cell membrane</location>
        <topology>Multi-pass membrane protein</topology>
    </subcellularLocation>
</comment>
<comment type="similarity">
    <text evidence="3">Belongs to the ADP/ATP translocase tlc family.</text>
</comment>
<organism>
    <name type="scientific">Rickettsia prowazekii (strain Madrid E)</name>
    <dbReference type="NCBI Taxonomy" id="272947"/>
    <lineage>
        <taxon>Bacteria</taxon>
        <taxon>Pseudomonadati</taxon>
        <taxon>Pseudomonadota</taxon>
        <taxon>Alphaproteobacteria</taxon>
        <taxon>Rickettsiales</taxon>
        <taxon>Rickettsiaceae</taxon>
        <taxon>Rickettsieae</taxon>
        <taxon>Rickettsia</taxon>
        <taxon>typhus group</taxon>
    </lineage>
</organism>
<name>TLCE_RICPR</name>
<accession>O05962</accession>
<evidence type="ECO:0000250" key="1"/>
<evidence type="ECO:0000255" key="2"/>
<evidence type="ECO:0000305" key="3"/>